<proteinExistence type="inferred from homology"/>
<gene>
    <name evidence="1" type="primary">obg</name>
    <name type="ordered locus">BMA10247_3260</name>
</gene>
<feature type="chain" id="PRO_0000385784" description="GTPase Obg">
    <location>
        <begin position="1"/>
        <end position="372"/>
    </location>
</feature>
<feature type="domain" description="Obg" evidence="2">
    <location>
        <begin position="1"/>
        <end position="159"/>
    </location>
</feature>
<feature type="domain" description="OBG-type G" evidence="1">
    <location>
        <begin position="160"/>
        <end position="334"/>
    </location>
</feature>
<feature type="region of interest" description="Disordered" evidence="3">
    <location>
        <begin position="128"/>
        <end position="147"/>
    </location>
</feature>
<feature type="binding site" evidence="1">
    <location>
        <begin position="166"/>
        <end position="173"/>
    </location>
    <ligand>
        <name>GTP</name>
        <dbReference type="ChEBI" id="CHEBI:37565"/>
    </ligand>
</feature>
<feature type="binding site" evidence="1">
    <location>
        <position position="173"/>
    </location>
    <ligand>
        <name>Mg(2+)</name>
        <dbReference type="ChEBI" id="CHEBI:18420"/>
    </ligand>
</feature>
<feature type="binding site" evidence="1">
    <location>
        <begin position="191"/>
        <end position="195"/>
    </location>
    <ligand>
        <name>GTP</name>
        <dbReference type="ChEBI" id="CHEBI:37565"/>
    </ligand>
</feature>
<feature type="binding site" evidence="1">
    <location>
        <position position="193"/>
    </location>
    <ligand>
        <name>Mg(2+)</name>
        <dbReference type="ChEBI" id="CHEBI:18420"/>
    </ligand>
</feature>
<feature type="binding site" evidence="1">
    <location>
        <begin position="213"/>
        <end position="216"/>
    </location>
    <ligand>
        <name>GTP</name>
        <dbReference type="ChEBI" id="CHEBI:37565"/>
    </ligand>
</feature>
<feature type="binding site" evidence="1">
    <location>
        <begin position="284"/>
        <end position="287"/>
    </location>
    <ligand>
        <name>GTP</name>
        <dbReference type="ChEBI" id="CHEBI:37565"/>
    </ligand>
</feature>
<feature type="binding site" evidence="1">
    <location>
        <begin position="315"/>
        <end position="317"/>
    </location>
    <ligand>
        <name>GTP</name>
        <dbReference type="ChEBI" id="CHEBI:37565"/>
    </ligand>
</feature>
<organism>
    <name type="scientific">Burkholderia mallei (strain NCTC 10247)</name>
    <dbReference type="NCBI Taxonomy" id="320389"/>
    <lineage>
        <taxon>Bacteria</taxon>
        <taxon>Pseudomonadati</taxon>
        <taxon>Pseudomonadota</taxon>
        <taxon>Betaproteobacteria</taxon>
        <taxon>Burkholderiales</taxon>
        <taxon>Burkholderiaceae</taxon>
        <taxon>Burkholderia</taxon>
        <taxon>pseudomallei group</taxon>
    </lineage>
</organism>
<reference key="1">
    <citation type="journal article" date="2010" name="Genome Biol. Evol.">
        <title>Continuing evolution of Burkholderia mallei through genome reduction and large-scale rearrangements.</title>
        <authorList>
            <person name="Losada L."/>
            <person name="Ronning C.M."/>
            <person name="DeShazer D."/>
            <person name="Woods D."/>
            <person name="Fedorova N."/>
            <person name="Kim H.S."/>
            <person name="Shabalina S.A."/>
            <person name="Pearson T.R."/>
            <person name="Brinkac L."/>
            <person name="Tan P."/>
            <person name="Nandi T."/>
            <person name="Crabtree J."/>
            <person name="Badger J."/>
            <person name="Beckstrom-Sternberg S."/>
            <person name="Saqib M."/>
            <person name="Schutzer S.E."/>
            <person name="Keim P."/>
            <person name="Nierman W.C."/>
        </authorList>
    </citation>
    <scope>NUCLEOTIDE SEQUENCE [LARGE SCALE GENOMIC DNA]</scope>
    <source>
        <strain>NCTC 10247</strain>
    </source>
</reference>
<sequence length="372" mass="40150">MKFIDEARIEVIAGDGGDGSASMRREKFVPFGGPDGGDGGRGGSVYVIADRNINTLIDYRYAKKHMARNGENGRGSDCYGKGGDDITLRMPVGTVINDMDTGELIADLTEHDQKVLVAKGGAGGLGNLHFKSSTNRAPRQKTDGKPGERRMLKLELKVLADVGLLGMPNAGKSTFISSVSNAKPKIADYPFTTLAPNLGVVRVGPGKSFVIADIPGLIEGAAEGAGLGHQFLRHLQRTGLLLHLVDLAPFDERVDPVAEARAIVGELRKYDESLYEKPRWLVLNKLDMVPEDERRARVADFIERFGWTGPVFEISALTGQGCEGLVYAIHDYLVEHSDAHRAELAEDLASDVRFRDAPGAGGEPHERDAGAH</sequence>
<accession>A3MR90</accession>
<comment type="function">
    <text evidence="1">An essential GTPase which binds GTP, GDP and possibly (p)ppGpp with moderate affinity, with high nucleotide exchange rates and a fairly low GTP hydrolysis rate. Plays a role in control of the cell cycle, stress response, ribosome biogenesis and in those bacteria that undergo differentiation, in morphogenesis control.</text>
</comment>
<comment type="cofactor">
    <cofactor evidence="1">
        <name>Mg(2+)</name>
        <dbReference type="ChEBI" id="CHEBI:18420"/>
    </cofactor>
</comment>
<comment type="subunit">
    <text evidence="1">Monomer.</text>
</comment>
<comment type="subcellular location">
    <subcellularLocation>
        <location evidence="1">Cytoplasm</location>
    </subcellularLocation>
</comment>
<comment type="similarity">
    <text evidence="1">Belongs to the TRAFAC class OBG-HflX-like GTPase superfamily. OBG GTPase family.</text>
</comment>
<keyword id="KW-0963">Cytoplasm</keyword>
<keyword id="KW-0342">GTP-binding</keyword>
<keyword id="KW-0378">Hydrolase</keyword>
<keyword id="KW-0460">Magnesium</keyword>
<keyword id="KW-0479">Metal-binding</keyword>
<keyword id="KW-0547">Nucleotide-binding</keyword>
<evidence type="ECO:0000255" key="1">
    <source>
        <dbReference type="HAMAP-Rule" id="MF_01454"/>
    </source>
</evidence>
<evidence type="ECO:0000255" key="2">
    <source>
        <dbReference type="PROSITE-ProRule" id="PRU01231"/>
    </source>
</evidence>
<evidence type="ECO:0000256" key="3">
    <source>
        <dbReference type="SAM" id="MobiDB-lite"/>
    </source>
</evidence>
<name>OBG_BURM7</name>
<protein>
    <recommendedName>
        <fullName evidence="1">GTPase Obg</fullName>
        <ecNumber evidence="1">3.6.5.-</ecNumber>
    </recommendedName>
    <alternativeName>
        <fullName evidence="1">GTP-binding protein Obg</fullName>
    </alternativeName>
</protein>
<dbReference type="EC" id="3.6.5.-" evidence="1"/>
<dbReference type="EMBL" id="CP000548">
    <property type="protein sequence ID" value="ABO04318.1"/>
    <property type="molecule type" value="Genomic_DNA"/>
</dbReference>
<dbReference type="SMR" id="A3MR90"/>
<dbReference type="KEGG" id="bmaz:BM44_108"/>
<dbReference type="KEGG" id="bmn:BMA10247_3260"/>
<dbReference type="PATRIC" id="fig|320389.8.peg.116"/>
<dbReference type="GO" id="GO:0005737">
    <property type="term" value="C:cytoplasm"/>
    <property type="evidence" value="ECO:0007669"/>
    <property type="project" value="UniProtKB-SubCell"/>
</dbReference>
<dbReference type="GO" id="GO:0005525">
    <property type="term" value="F:GTP binding"/>
    <property type="evidence" value="ECO:0007669"/>
    <property type="project" value="UniProtKB-UniRule"/>
</dbReference>
<dbReference type="GO" id="GO:0003924">
    <property type="term" value="F:GTPase activity"/>
    <property type="evidence" value="ECO:0007669"/>
    <property type="project" value="UniProtKB-UniRule"/>
</dbReference>
<dbReference type="GO" id="GO:0000287">
    <property type="term" value="F:magnesium ion binding"/>
    <property type="evidence" value="ECO:0007669"/>
    <property type="project" value="InterPro"/>
</dbReference>
<dbReference type="GO" id="GO:0042254">
    <property type="term" value="P:ribosome biogenesis"/>
    <property type="evidence" value="ECO:0007669"/>
    <property type="project" value="UniProtKB-UniRule"/>
</dbReference>
<dbReference type="CDD" id="cd01898">
    <property type="entry name" value="Obg"/>
    <property type="match status" value="1"/>
</dbReference>
<dbReference type="FunFam" id="2.70.210.12:FF:000001">
    <property type="entry name" value="GTPase Obg"/>
    <property type="match status" value="1"/>
</dbReference>
<dbReference type="Gene3D" id="2.70.210.12">
    <property type="entry name" value="GTP1/OBG domain"/>
    <property type="match status" value="1"/>
</dbReference>
<dbReference type="Gene3D" id="3.40.50.300">
    <property type="entry name" value="P-loop containing nucleotide triphosphate hydrolases"/>
    <property type="match status" value="1"/>
</dbReference>
<dbReference type="HAMAP" id="MF_01454">
    <property type="entry name" value="GTPase_Obg"/>
    <property type="match status" value="1"/>
</dbReference>
<dbReference type="InterPro" id="IPR031167">
    <property type="entry name" value="G_OBG"/>
</dbReference>
<dbReference type="InterPro" id="IPR006073">
    <property type="entry name" value="GTP-bd"/>
</dbReference>
<dbReference type="InterPro" id="IPR014100">
    <property type="entry name" value="GTP-bd_Obg/CgtA"/>
</dbReference>
<dbReference type="InterPro" id="IPR006074">
    <property type="entry name" value="GTP1-OBG_CS"/>
</dbReference>
<dbReference type="InterPro" id="IPR006169">
    <property type="entry name" value="GTP1_OBG_dom"/>
</dbReference>
<dbReference type="InterPro" id="IPR036726">
    <property type="entry name" value="GTP1_OBG_dom_sf"/>
</dbReference>
<dbReference type="InterPro" id="IPR045086">
    <property type="entry name" value="OBG_GTPase"/>
</dbReference>
<dbReference type="InterPro" id="IPR027417">
    <property type="entry name" value="P-loop_NTPase"/>
</dbReference>
<dbReference type="NCBIfam" id="TIGR02729">
    <property type="entry name" value="Obg_CgtA"/>
    <property type="match status" value="1"/>
</dbReference>
<dbReference type="NCBIfam" id="NF008954">
    <property type="entry name" value="PRK12296.1"/>
    <property type="match status" value="1"/>
</dbReference>
<dbReference type="NCBIfam" id="NF008955">
    <property type="entry name" value="PRK12297.1"/>
    <property type="match status" value="1"/>
</dbReference>
<dbReference type="NCBIfam" id="NF008956">
    <property type="entry name" value="PRK12299.1"/>
    <property type="match status" value="1"/>
</dbReference>
<dbReference type="PANTHER" id="PTHR11702">
    <property type="entry name" value="DEVELOPMENTALLY REGULATED GTP-BINDING PROTEIN-RELATED"/>
    <property type="match status" value="1"/>
</dbReference>
<dbReference type="PANTHER" id="PTHR11702:SF31">
    <property type="entry name" value="MITOCHONDRIAL RIBOSOME-ASSOCIATED GTPASE 2"/>
    <property type="match status" value="1"/>
</dbReference>
<dbReference type="Pfam" id="PF01018">
    <property type="entry name" value="GTP1_OBG"/>
    <property type="match status" value="1"/>
</dbReference>
<dbReference type="Pfam" id="PF01926">
    <property type="entry name" value="MMR_HSR1"/>
    <property type="match status" value="1"/>
</dbReference>
<dbReference type="PIRSF" id="PIRSF002401">
    <property type="entry name" value="GTP_bd_Obg/CgtA"/>
    <property type="match status" value="1"/>
</dbReference>
<dbReference type="PRINTS" id="PR00326">
    <property type="entry name" value="GTP1OBG"/>
</dbReference>
<dbReference type="SUPFAM" id="SSF82051">
    <property type="entry name" value="Obg GTP-binding protein N-terminal domain"/>
    <property type="match status" value="1"/>
</dbReference>
<dbReference type="SUPFAM" id="SSF52540">
    <property type="entry name" value="P-loop containing nucleoside triphosphate hydrolases"/>
    <property type="match status" value="1"/>
</dbReference>
<dbReference type="PROSITE" id="PS51710">
    <property type="entry name" value="G_OBG"/>
    <property type="match status" value="1"/>
</dbReference>
<dbReference type="PROSITE" id="PS00905">
    <property type="entry name" value="GTP1_OBG"/>
    <property type="match status" value="1"/>
</dbReference>
<dbReference type="PROSITE" id="PS51883">
    <property type="entry name" value="OBG"/>
    <property type="match status" value="1"/>
</dbReference>